<sequence>MKNYHAPDEKGFFGEHGGLYVSETLIPALKELEQAYNEAKNDPEFWAEFRRDLKHYVGRPSPVYHAARLSEHLGGAQIWLKREDLNHTGAHKVNNTIGQALLARRMGKKRVIAETGAGQHGVASATVAARFGMTCDVYMGADDIQRQMPNVFRMKLLGANVIGVDSGSRTLKDAMNEAMREWVARVDDTFYIIGTAAGPAPYPEMVRDFQCVIGNEAKAQMQEAIGRQPDVAVACVGGGSNAIGLFYPYIEEENVRLVGVEAGGLGVDTPDHAAPITSGAPIGVLHGFRSYLMQDENGQVLGTHSVSAGLDYPGIGPEHSHLHDIKRVEYTVAKDDEALEAFDLLCRFEGIIPALESSHAVAWAVKNAPKMGKDQVILVNLSGRGDKDINTVAKLKGIEL</sequence>
<comment type="function">
    <text evidence="1">The beta subunit is responsible for the synthesis of L-tryptophan from indole and L-serine.</text>
</comment>
<comment type="catalytic activity">
    <reaction evidence="1">
        <text>(1S,2R)-1-C-(indol-3-yl)glycerol 3-phosphate + L-serine = D-glyceraldehyde 3-phosphate + L-tryptophan + H2O</text>
        <dbReference type="Rhea" id="RHEA:10532"/>
        <dbReference type="ChEBI" id="CHEBI:15377"/>
        <dbReference type="ChEBI" id="CHEBI:33384"/>
        <dbReference type="ChEBI" id="CHEBI:57912"/>
        <dbReference type="ChEBI" id="CHEBI:58866"/>
        <dbReference type="ChEBI" id="CHEBI:59776"/>
        <dbReference type="EC" id="4.2.1.20"/>
    </reaction>
</comment>
<comment type="cofactor">
    <cofactor evidence="1">
        <name>pyridoxal 5'-phosphate</name>
        <dbReference type="ChEBI" id="CHEBI:597326"/>
    </cofactor>
</comment>
<comment type="pathway">
    <text evidence="1">Amino-acid biosynthesis; L-tryptophan biosynthesis; L-tryptophan from chorismate: step 5/5.</text>
</comment>
<comment type="subunit">
    <text evidence="1">Tetramer of two alpha and two beta chains.</text>
</comment>
<comment type="similarity">
    <text evidence="1">Belongs to the TrpB family.</text>
</comment>
<protein>
    <recommendedName>
        <fullName evidence="1">Tryptophan synthase beta chain</fullName>
        <ecNumber evidence="1">4.2.1.20</ecNumber>
    </recommendedName>
</protein>
<organism>
    <name type="scientific">Neisseria gonorrhoeae (strain NCCP11945)</name>
    <dbReference type="NCBI Taxonomy" id="521006"/>
    <lineage>
        <taxon>Bacteria</taxon>
        <taxon>Pseudomonadati</taxon>
        <taxon>Pseudomonadota</taxon>
        <taxon>Betaproteobacteria</taxon>
        <taxon>Neisseriales</taxon>
        <taxon>Neisseriaceae</taxon>
        <taxon>Neisseria</taxon>
    </lineage>
</organism>
<dbReference type="EC" id="4.2.1.20" evidence="1"/>
<dbReference type="EMBL" id="CP001050">
    <property type="protein sequence ID" value="ACF29109.1"/>
    <property type="molecule type" value="Genomic_DNA"/>
</dbReference>
<dbReference type="RefSeq" id="WP_003690751.1">
    <property type="nucleotide sequence ID" value="NC_011035.1"/>
</dbReference>
<dbReference type="SMR" id="B4RJV8"/>
<dbReference type="GeneID" id="66752610"/>
<dbReference type="KEGG" id="ngk:NGK_0418"/>
<dbReference type="HOGENOM" id="CLU_016734_3_1_4"/>
<dbReference type="UniPathway" id="UPA00035">
    <property type="reaction ID" value="UER00044"/>
</dbReference>
<dbReference type="Proteomes" id="UP000002564">
    <property type="component" value="Chromosome"/>
</dbReference>
<dbReference type="GO" id="GO:0005737">
    <property type="term" value="C:cytoplasm"/>
    <property type="evidence" value="ECO:0007669"/>
    <property type="project" value="TreeGrafter"/>
</dbReference>
<dbReference type="GO" id="GO:0004834">
    <property type="term" value="F:tryptophan synthase activity"/>
    <property type="evidence" value="ECO:0007669"/>
    <property type="project" value="UniProtKB-UniRule"/>
</dbReference>
<dbReference type="CDD" id="cd06446">
    <property type="entry name" value="Trp-synth_B"/>
    <property type="match status" value="1"/>
</dbReference>
<dbReference type="FunFam" id="3.40.50.1100:FF:000001">
    <property type="entry name" value="Tryptophan synthase beta chain"/>
    <property type="match status" value="1"/>
</dbReference>
<dbReference type="FunFam" id="3.40.50.1100:FF:000004">
    <property type="entry name" value="Tryptophan synthase beta chain"/>
    <property type="match status" value="1"/>
</dbReference>
<dbReference type="Gene3D" id="3.40.50.1100">
    <property type="match status" value="2"/>
</dbReference>
<dbReference type="HAMAP" id="MF_00133">
    <property type="entry name" value="Trp_synth_beta"/>
    <property type="match status" value="1"/>
</dbReference>
<dbReference type="InterPro" id="IPR006653">
    <property type="entry name" value="Trp_synth_b_CS"/>
</dbReference>
<dbReference type="InterPro" id="IPR006654">
    <property type="entry name" value="Trp_synth_beta"/>
</dbReference>
<dbReference type="InterPro" id="IPR023026">
    <property type="entry name" value="Trp_synth_beta/beta-like"/>
</dbReference>
<dbReference type="InterPro" id="IPR001926">
    <property type="entry name" value="TrpB-like_PALP"/>
</dbReference>
<dbReference type="InterPro" id="IPR036052">
    <property type="entry name" value="TrpB-like_PALP_sf"/>
</dbReference>
<dbReference type="NCBIfam" id="TIGR00263">
    <property type="entry name" value="trpB"/>
    <property type="match status" value="1"/>
</dbReference>
<dbReference type="PANTHER" id="PTHR48077:SF3">
    <property type="entry name" value="TRYPTOPHAN SYNTHASE"/>
    <property type="match status" value="1"/>
</dbReference>
<dbReference type="PANTHER" id="PTHR48077">
    <property type="entry name" value="TRYPTOPHAN SYNTHASE-RELATED"/>
    <property type="match status" value="1"/>
</dbReference>
<dbReference type="Pfam" id="PF00291">
    <property type="entry name" value="PALP"/>
    <property type="match status" value="1"/>
</dbReference>
<dbReference type="PIRSF" id="PIRSF001413">
    <property type="entry name" value="Trp_syn_beta"/>
    <property type="match status" value="1"/>
</dbReference>
<dbReference type="SUPFAM" id="SSF53686">
    <property type="entry name" value="Tryptophan synthase beta subunit-like PLP-dependent enzymes"/>
    <property type="match status" value="1"/>
</dbReference>
<dbReference type="PROSITE" id="PS00168">
    <property type="entry name" value="TRP_SYNTHASE_BETA"/>
    <property type="match status" value="1"/>
</dbReference>
<gene>
    <name evidence="1" type="primary">trpB</name>
    <name type="ordered locus">NGK_0418</name>
</gene>
<reference key="1">
    <citation type="journal article" date="2008" name="J. Bacteriol.">
        <title>Complete genome sequence of Neisseria gonorrhoeae NCCP11945.</title>
        <authorList>
            <person name="Chung G.T."/>
            <person name="Yoo J.S."/>
            <person name="Oh H.B."/>
            <person name="Lee Y.S."/>
            <person name="Cha S.H."/>
            <person name="Kim S.J."/>
            <person name="Yoo C.K."/>
        </authorList>
    </citation>
    <scope>NUCLEOTIDE SEQUENCE [LARGE SCALE GENOMIC DNA]</scope>
    <source>
        <strain>NCCP11945</strain>
    </source>
</reference>
<evidence type="ECO:0000255" key="1">
    <source>
        <dbReference type="HAMAP-Rule" id="MF_00133"/>
    </source>
</evidence>
<proteinExistence type="inferred from homology"/>
<feature type="chain" id="PRO_1000095798" description="Tryptophan synthase beta chain">
    <location>
        <begin position="1"/>
        <end position="400"/>
    </location>
</feature>
<feature type="modified residue" description="N6-(pyridoxal phosphate)lysine" evidence="1">
    <location>
        <position position="92"/>
    </location>
</feature>
<name>TRPB_NEIG2</name>
<accession>B4RJV8</accession>
<keyword id="KW-0028">Amino-acid biosynthesis</keyword>
<keyword id="KW-0057">Aromatic amino acid biosynthesis</keyword>
<keyword id="KW-0456">Lyase</keyword>
<keyword id="KW-0663">Pyridoxal phosphate</keyword>
<keyword id="KW-0822">Tryptophan biosynthesis</keyword>